<accession>A2A7Q9</accession>
<accession>A0AUN9</accession>
<accession>Q7TT05</accession>
<feature type="chain" id="PRO_0000307188" description="E3 ubiquitin-protein ligase RNF19B">
    <location>
        <begin position="1"/>
        <end position="732"/>
    </location>
</feature>
<feature type="transmembrane region" description="Helical" evidence="3">
    <location>
        <begin position="351"/>
        <end position="371"/>
    </location>
</feature>
<feature type="transmembrane region" description="Helical" evidence="3">
    <location>
        <begin position="412"/>
        <end position="432"/>
    </location>
</feature>
<feature type="zinc finger region" description="RING-type 1" evidence="4">
    <location>
        <begin position="116"/>
        <end position="165"/>
    </location>
</feature>
<feature type="zinc finger region" description="IBR-type" evidence="4">
    <location>
        <begin position="183"/>
        <end position="248"/>
    </location>
</feature>
<feature type="zinc finger region" description="RING-type 2; atypical" evidence="4">
    <location>
        <begin position="284"/>
        <end position="315"/>
    </location>
</feature>
<feature type="region of interest" description="Required for ubiquitin ligase activity and for protection against staurosporin-induced cell death" evidence="2">
    <location>
        <begin position="1"/>
        <end position="315"/>
    </location>
</feature>
<feature type="region of interest" description="Disordered" evidence="5">
    <location>
        <begin position="1"/>
        <end position="109"/>
    </location>
</feature>
<feature type="region of interest" description="TRIAD supradomain" evidence="4">
    <location>
        <begin position="112"/>
        <end position="334"/>
    </location>
</feature>
<feature type="region of interest" description="Disordered" evidence="5">
    <location>
        <begin position="598"/>
        <end position="644"/>
    </location>
</feature>
<feature type="region of interest" description="Disordered" evidence="5">
    <location>
        <begin position="660"/>
        <end position="732"/>
    </location>
</feature>
<feature type="compositionally biased region" description="Pro residues" evidence="5">
    <location>
        <begin position="54"/>
        <end position="71"/>
    </location>
</feature>
<feature type="compositionally biased region" description="Low complexity" evidence="5">
    <location>
        <begin position="72"/>
        <end position="99"/>
    </location>
</feature>
<feature type="compositionally biased region" description="Acidic residues" evidence="5">
    <location>
        <begin position="100"/>
        <end position="109"/>
    </location>
</feature>
<feature type="compositionally biased region" description="Acidic residues" evidence="5">
    <location>
        <begin position="674"/>
        <end position="683"/>
    </location>
</feature>
<feature type="active site" evidence="4">
    <location>
        <position position="299"/>
    </location>
</feature>
<feature type="binding site" evidence="4">
    <location>
        <position position="116"/>
    </location>
    <ligand>
        <name>Zn(2+)</name>
        <dbReference type="ChEBI" id="CHEBI:29105"/>
        <label>1</label>
    </ligand>
</feature>
<feature type="binding site" evidence="4">
    <location>
        <position position="119"/>
    </location>
    <ligand>
        <name>Zn(2+)</name>
        <dbReference type="ChEBI" id="CHEBI:29105"/>
        <label>1</label>
    </ligand>
</feature>
<feature type="binding site" evidence="4">
    <location>
        <position position="139"/>
    </location>
    <ligand>
        <name>Zn(2+)</name>
        <dbReference type="ChEBI" id="CHEBI:29105"/>
        <label>1</label>
    </ligand>
</feature>
<feature type="binding site" evidence="4">
    <location>
        <position position="142"/>
    </location>
    <ligand>
        <name>Zn(2+)</name>
        <dbReference type="ChEBI" id="CHEBI:29105"/>
        <label>1</label>
    </ligand>
</feature>
<feature type="binding site" evidence="4">
    <location>
        <position position="203"/>
    </location>
    <ligand>
        <name>Zn(2+)</name>
        <dbReference type="ChEBI" id="CHEBI:29105"/>
        <label>2</label>
    </ligand>
</feature>
<feature type="binding site" evidence="4">
    <location>
        <position position="208"/>
    </location>
    <ligand>
        <name>Zn(2+)</name>
        <dbReference type="ChEBI" id="CHEBI:29105"/>
        <label>2</label>
    </ligand>
</feature>
<feature type="binding site" evidence="4">
    <location>
        <position position="225"/>
    </location>
    <ligand>
        <name>Zn(2+)</name>
        <dbReference type="ChEBI" id="CHEBI:29105"/>
        <label>2</label>
    </ligand>
</feature>
<feature type="binding site" evidence="4">
    <location>
        <position position="230"/>
    </location>
    <ligand>
        <name>Zn(2+)</name>
        <dbReference type="ChEBI" id="CHEBI:29105"/>
        <label>2</label>
    </ligand>
</feature>
<feature type="binding site" evidence="4">
    <location>
        <position position="235"/>
    </location>
    <ligand>
        <name>Zn(2+)</name>
        <dbReference type="ChEBI" id="CHEBI:29105"/>
        <label>3</label>
    </ligand>
</feature>
<feature type="binding site" evidence="4">
    <location>
        <position position="238"/>
    </location>
    <ligand>
        <name>Zn(2+)</name>
        <dbReference type="ChEBI" id="CHEBI:29105"/>
        <label>3</label>
    </ligand>
</feature>
<feature type="binding site" evidence="4">
    <location>
        <position position="243"/>
    </location>
    <ligand>
        <name>Zn(2+)</name>
        <dbReference type="ChEBI" id="CHEBI:29105"/>
        <label>3</label>
    </ligand>
</feature>
<feature type="binding site" evidence="4">
    <location>
        <position position="248"/>
    </location>
    <ligand>
        <name>Zn(2+)</name>
        <dbReference type="ChEBI" id="CHEBI:29105"/>
        <label>3</label>
    </ligand>
</feature>
<feature type="binding site" evidence="4">
    <location>
        <position position="284"/>
    </location>
    <ligand>
        <name>Zn(2+)</name>
        <dbReference type="ChEBI" id="CHEBI:29105"/>
        <label>4</label>
    </ligand>
</feature>
<feature type="binding site" evidence="4">
    <location>
        <position position="287"/>
    </location>
    <ligand>
        <name>Zn(2+)</name>
        <dbReference type="ChEBI" id="CHEBI:29105"/>
        <label>4</label>
    </ligand>
</feature>
<feature type="binding site" evidence="4">
    <location>
        <position position="304"/>
    </location>
    <ligand>
        <name>Zn(2+)</name>
        <dbReference type="ChEBI" id="CHEBI:29105"/>
        <label>4</label>
    </ligand>
</feature>
<feature type="binding site" evidence="4">
    <location>
        <position position="307"/>
    </location>
    <ligand>
        <name>Zn(2+)</name>
        <dbReference type="ChEBI" id="CHEBI:29105"/>
        <label>4</label>
    </ligand>
</feature>
<feature type="binding site" evidence="4">
    <location>
        <position position="312"/>
    </location>
    <ligand>
        <name>Zn(2+)</name>
        <dbReference type="ChEBI" id="CHEBI:29105"/>
        <label>5</label>
    </ligand>
</feature>
<feature type="binding site" evidence="4">
    <location>
        <position position="315"/>
    </location>
    <ligand>
        <name>Zn(2+)</name>
        <dbReference type="ChEBI" id="CHEBI:29105"/>
        <label>5</label>
    </ligand>
</feature>
<feature type="binding site" evidence="4">
    <location>
        <position position="323"/>
    </location>
    <ligand>
        <name>Zn(2+)</name>
        <dbReference type="ChEBI" id="CHEBI:29105"/>
        <label>5</label>
    </ligand>
</feature>
<feature type="binding site" evidence="4">
    <location>
        <position position="330"/>
    </location>
    <ligand>
        <name>Zn(2+)</name>
        <dbReference type="ChEBI" id="CHEBI:29105"/>
        <label>5</label>
    </ligand>
</feature>
<feature type="sequence conflict" description="In Ref. 1 and 3; AAI17808." evidence="8" ref="1 3">
    <location>
        <position position="278"/>
    </location>
</feature>
<feature type="sequence conflict" description="In Ref. 3; AAH52529." evidence="8" ref="3">
    <original>Q</original>
    <variation>P</variation>
    <location>
        <position position="721"/>
    </location>
</feature>
<gene>
    <name type="primary">Rnf19b</name>
    <name type="synonym">Ibrdc3</name>
    <name type="synonym">Nklam</name>
</gene>
<protein>
    <recommendedName>
        <fullName>E3 ubiquitin-protein ligase RNF19B</fullName>
        <ecNumber evidence="1">2.3.2.31</ecNumber>
    </recommendedName>
    <alternativeName>
        <fullName>IBR domain-containing protein 3</fullName>
    </alternativeName>
    <alternativeName>
        <fullName>Natural killer lytic-associated molecule</fullName>
    </alternativeName>
    <alternativeName>
        <fullName>RING finger protein 19B</fullName>
    </alternativeName>
</protein>
<name>RN19B_MOUSE</name>
<keyword id="KW-1064">Adaptive immunity</keyword>
<keyword id="KW-0256">Endoplasmic reticulum</keyword>
<keyword id="KW-0391">Immunity</keyword>
<keyword id="KW-0472">Membrane</keyword>
<keyword id="KW-0479">Metal-binding</keyword>
<keyword id="KW-1185">Reference proteome</keyword>
<keyword id="KW-0677">Repeat</keyword>
<keyword id="KW-0808">Transferase</keyword>
<keyword id="KW-0812">Transmembrane</keyword>
<keyword id="KW-1133">Transmembrane helix</keyword>
<keyword id="KW-0833">Ubl conjugation pathway</keyword>
<keyword id="KW-0862">Zinc</keyword>
<keyword id="KW-0863">Zinc-finger</keyword>
<sequence>MGSEKDSESPRSTSLHAAAPDPKCRSGGRRRRLTFHSVFSASARGRRARTKPQAEPPPPAAPPPPPPPAPAPVEAQAPPVEALPSEPAAEAEAEAVAAGPEEDEAAEGGGAEEVECPLCLVRLPPERAPRLLSCPHRSCRDCLRHYLRLEISESRVPISCPECSERLNPHDIRLLLADPPLMHKYEEFMLRRYLASDPDCRWCPAPDCGYAVIAYGCASCPKLTCEREGCQTEFCYHCKQIWHPNQTCDMARQQRAQTLRVRTKHTSGLSYGQESGPADDIKPCPRCSAYIIKMNDGSCNHMTCAVCGCEFCWLCMKEISDLHYLSPSGCTFWGKKPWSRKKKILWQLGTLIGAPVGISLIAGIAIPAMVIGIPVYVGRKIHSRYEGRKTSKHKRNLAITGGVTLSVIASPVIAAVSVGIGVPIMLAYVYGVVPISLCRGGGCGVSTANGKGVKIEFDEDDGPITVADAWRALKNPSIGESSIEGLTSVLSTSGSPTDGLSVMQGPYSETASFAALSGGTLSGGILSSGKGKYSRLEVQADVQKEIFPKDTASLGAISDSASTRAMAGSIISSYNPQDRECNNMEIQVDIEAKPSHYQLVSGSSTEDSLHVHAQVAEKEEEGNGAGGGSGGSEDDPPYKHQSCEQKDCLASKAWDISLAQPESIRSDLESSDTQSDDVPDITSDECGSPRSHAAACPSTPQVHGAPSPSAHKNLAAPAEGQTVLKSEEYEVE</sequence>
<dbReference type="EC" id="2.3.2.31" evidence="1"/>
<dbReference type="EMBL" id="AL606977">
    <property type="protein sequence ID" value="CAM19707.1"/>
    <property type="status" value="ALT_INIT"/>
    <property type="molecule type" value="Genomic_DNA"/>
</dbReference>
<dbReference type="EMBL" id="BC052529">
    <property type="protein sequence ID" value="AAH52529.1"/>
    <property type="status" value="ALT_INIT"/>
    <property type="molecule type" value="mRNA"/>
</dbReference>
<dbReference type="EMBL" id="BC117807">
    <property type="protein sequence ID" value="AAI17808.1"/>
    <property type="molecule type" value="mRNA"/>
</dbReference>
<dbReference type="CCDS" id="CCDS89829.1"/>
<dbReference type="RefSeq" id="NP_001355692.1">
    <property type="nucleotide sequence ID" value="NM_001368763.1"/>
</dbReference>
<dbReference type="RefSeq" id="XP_006503521.1">
    <property type="nucleotide sequence ID" value="XM_006503458.3"/>
</dbReference>
<dbReference type="BioGRID" id="217322">
    <property type="interactions" value="2"/>
</dbReference>
<dbReference type="FunCoup" id="A2A7Q9">
    <property type="interactions" value="1404"/>
</dbReference>
<dbReference type="STRING" id="10090.ENSMUSP00000131373"/>
<dbReference type="iPTMnet" id="A2A7Q9"/>
<dbReference type="PhosphoSitePlus" id="A2A7Q9"/>
<dbReference type="SwissPalm" id="A2A7Q9"/>
<dbReference type="PaxDb" id="10090-ENSMUSP00000030584"/>
<dbReference type="ProteomicsDB" id="300537"/>
<dbReference type="Antibodypedia" id="57831">
    <property type="antibodies" value="112 antibodies from 14 providers"/>
</dbReference>
<dbReference type="Ensembl" id="ENSMUST00000030584.11">
    <property type="protein sequence ID" value="ENSMUSP00000030584.5"/>
    <property type="gene ID" value="ENSMUSG00000028793.16"/>
</dbReference>
<dbReference type="GeneID" id="75234"/>
<dbReference type="UCSC" id="uc008uvx.2">
    <property type="organism name" value="mouse"/>
</dbReference>
<dbReference type="AGR" id="MGI:1922484"/>
<dbReference type="MGI" id="MGI:1922484">
    <property type="gene designation" value="Rnf19b"/>
</dbReference>
<dbReference type="VEuPathDB" id="HostDB:ENSMUSG00000028793"/>
<dbReference type="eggNOG" id="KOG1815">
    <property type="taxonomic scope" value="Eukaryota"/>
</dbReference>
<dbReference type="GeneTree" id="ENSGT00940000158451"/>
<dbReference type="InParanoid" id="A2A7Q9"/>
<dbReference type="OrthoDB" id="1431934at2759"/>
<dbReference type="PhylomeDB" id="A2A7Q9"/>
<dbReference type="TreeFam" id="TF324777"/>
<dbReference type="Reactome" id="R-MMU-983168">
    <property type="pathway name" value="Antigen processing: Ubiquitination &amp; Proteasome degradation"/>
</dbReference>
<dbReference type="UniPathway" id="UPA00143"/>
<dbReference type="BioGRID-ORCS" id="75234">
    <property type="hits" value="4 hits in 81 CRISPR screens"/>
</dbReference>
<dbReference type="ChiTaRS" id="Rnf19b">
    <property type="organism name" value="mouse"/>
</dbReference>
<dbReference type="PRO" id="PR:A2A7Q9"/>
<dbReference type="Proteomes" id="UP000000589">
    <property type="component" value="Chromosome 4"/>
</dbReference>
<dbReference type="RNAct" id="A2A7Q9">
    <property type="molecule type" value="protein"/>
</dbReference>
<dbReference type="Bgee" id="ENSMUSG00000028793">
    <property type="expression patterns" value="Expressed in seminiferous tubule of testis and 238 other cell types or tissues"/>
</dbReference>
<dbReference type="ExpressionAtlas" id="A2A7Q9">
    <property type="expression patterns" value="baseline and differential"/>
</dbReference>
<dbReference type="GO" id="GO:0044194">
    <property type="term" value="C:cytolytic granule"/>
    <property type="evidence" value="ECO:0000314"/>
    <property type="project" value="MGI"/>
</dbReference>
<dbReference type="GO" id="GO:0005829">
    <property type="term" value="C:cytosol"/>
    <property type="evidence" value="ECO:0007669"/>
    <property type="project" value="Ensembl"/>
</dbReference>
<dbReference type="GO" id="GO:0005783">
    <property type="term" value="C:endoplasmic reticulum"/>
    <property type="evidence" value="ECO:0000250"/>
    <property type="project" value="UniProtKB"/>
</dbReference>
<dbReference type="GO" id="GO:0005789">
    <property type="term" value="C:endoplasmic reticulum membrane"/>
    <property type="evidence" value="ECO:0007669"/>
    <property type="project" value="UniProtKB-SubCell"/>
</dbReference>
<dbReference type="GO" id="GO:0043130">
    <property type="term" value="F:ubiquitin binding"/>
    <property type="evidence" value="ECO:0000250"/>
    <property type="project" value="UniProtKB"/>
</dbReference>
<dbReference type="GO" id="GO:0061630">
    <property type="term" value="F:ubiquitin protein ligase activity"/>
    <property type="evidence" value="ECO:0000250"/>
    <property type="project" value="UniProtKB"/>
</dbReference>
<dbReference type="GO" id="GO:0008270">
    <property type="term" value="F:zinc ion binding"/>
    <property type="evidence" value="ECO:0007669"/>
    <property type="project" value="UniProtKB-KW"/>
</dbReference>
<dbReference type="GO" id="GO:0002250">
    <property type="term" value="P:adaptive immune response"/>
    <property type="evidence" value="ECO:0007669"/>
    <property type="project" value="UniProtKB-KW"/>
</dbReference>
<dbReference type="GO" id="GO:0042267">
    <property type="term" value="P:natural killer cell mediated cytotoxicity"/>
    <property type="evidence" value="ECO:0000315"/>
    <property type="project" value="MGI"/>
</dbReference>
<dbReference type="GO" id="GO:0051865">
    <property type="term" value="P:protein autoubiquitination"/>
    <property type="evidence" value="ECO:0000250"/>
    <property type="project" value="UniProtKB"/>
</dbReference>
<dbReference type="CDD" id="cd20363">
    <property type="entry name" value="BRcat-RBR_RNF19B"/>
    <property type="match status" value="1"/>
</dbReference>
<dbReference type="CDD" id="cd20355">
    <property type="entry name" value="Rcat_RBR_RNF19"/>
    <property type="match status" value="1"/>
</dbReference>
<dbReference type="CDD" id="cd16776">
    <property type="entry name" value="RING-HC_RBR_RNF19B"/>
    <property type="match status" value="1"/>
</dbReference>
<dbReference type="FunFam" id="1.20.120.1750:FF:000001">
    <property type="entry name" value="RBR-type E3 ubiquitin transferase"/>
    <property type="match status" value="1"/>
</dbReference>
<dbReference type="FunFam" id="2.20.25.20:FF:000004">
    <property type="entry name" value="RBR-type E3 ubiquitin transferase"/>
    <property type="match status" value="1"/>
</dbReference>
<dbReference type="FunFam" id="3.30.40.10:FF:000052">
    <property type="entry name" value="RBR-type E3 ubiquitin transferase"/>
    <property type="match status" value="1"/>
</dbReference>
<dbReference type="Gene3D" id="1.20.120.1750">
    <property type="match status" value="1"/>
</dbReference>
<dbReference type="Gene3D" id="2.20.25.20">
    <property type="match status" value="1"/>
</dbReference>
<dbReference type="Gene3D" id="3.30.40.10">
    <property type="entry name" value="Zinc/RING finger domain, C3HC4 (zinc finger)"/>
    <property type="match status" value="1"/>
</dbReference>
<dbReference type="InterPro" id="IPR031127">
    <property type="entry name" value="E3_UB_ligase_RBR"/>
</dbReference>
<dbReference type="InterPro" id="IPR002867">
    <property type="entry name" value="IBR_dom"/>
</dbReference>
<dbReference type="InterPro" id="IPR044066">
    <property type="entry name" value="TRIAD_supradom"/>
</dbReference>
<dbReference type="InterPro" id="IPR001841">
    <property type="entry name" value="Znf_RING"/>
</dbReference>
<dbReference type="InterPro" id="IPR013083">
    <property type="entry name" value="Znf_RING/FYVE/PHD"/>
</dbReference>
<dbReference type="PANTHER" id="PTHR11685">
    <property type="entry name" value="RBR FAMILY RING FINGER AND IBR DOMAIN-CONTAINING"/>
    <property type="match status" value="1"/>
</dbReference>
<dbReference type="Pfam" id="PF01485">
    <property type="entry name" value="IBR"/>
    <property type="match status" value="1"/>
</dbReference>
<dbReference type="Pfam" id="PF22191">
    <property type="entry name" value="IBR_1"/>
    <property type="match status" value="1"/>
</dbReference>
<dbReference type="SMART" id="SM00647">
    <property type="entry name" value="IBR"/>
    <property type="match status" value="2"/>
</dbReference>
<dbReference type="SMART" id="SM00184">
    <property type="entry name" value="RING"/>
    <property type="match status" value="1"/>
</dbReference>
<dbReference type="SUPFAM" id="SSF57850">
    <property type="entry name" value="RING/U-box"/>
    <property type="match status" value="3"/>
</dbReference>
<dbReference type="PROSITE" id="PS51873">
    <property type="entry name" value="TRIAD"/>
    <property type="match status" value="1"/>
</dbReference>
<dbReference type="PROSITE" id="PS50089">
    <property type="entry name" value="ZF_RING_2"/>
    <property type="match status" value="1"/>
</dbReference>
<comment type="function">
    <text evidence="2">E3 ubiquitin-protein ligase which accepts ubiquitin from E2 ubiquitin-conjugating enzymes UBE2L3 and UBE2L6 in the form of a thioester and then directly transfers the ubiquitin to targeted substrates, such as UCKL1. Involved in the cytolytic activity of natural killer cells and cytotoxic T-cells. Protects against staurosporin-induced cell death (By similarity).</text>
</comment>
<comment type="catalytic activity">
    <reaction evidence="1">
        <text>[E2 ubiquitin-conjugating enzyme]-S-ubiquitinyl-L-cysteine + [acceptor protein]-L-lysine = [E2 ubiquitin-conjugating enzyme]-L-cysteine + [acceptor protein]-N(6)-ubiquitinyl-L-lysine.</text>
        <dbReference type="EC" id="2.3.2.31"/>
    </reaction>
</comment>
<comment type="pathway">
    <text>Protein modification; protein ubiquitination.</text>
</comment>
<comment type="subunit">
    <text evidence="2">Interacts with UBE2L3, UBE2L6 and UCKL1.</text>
</comment>
<comment type="subcellular location">
    <subcellularLocation>
        <location evidence="2">Cytoplasmic granule membrane</location>
        <topology evidence="2">Multi-pass membrane protein</topology>
    </subcellularLocation>
    <subcellularLocation>
        <location evidence="2">Endoplasmic reticulum membrane</location>
        <topology evidence="2">Multi-pass membrane protein</topology>
    </subcellularLocation>
</comment>
<comment type="tissue specificity">
    <text evidence="6 7">Expressed specifically in natural killer cells, activated macrophages and cytotoxic T-cells (PubMed:10912506). Present in macrophages (at protein level) (PubMed:10912506). Ubiquitously expressed with high expression in testis (PubMed:27485036).</text>
</comment>
<comment type="induction">
    <text evidence="6">By IFNG and LPS in macrophages. By IL2 in natural killer cells and cytotoxic T-cells.</text>
</comment>
<comment type="domain">
    <text evidence="2">The first IBR-type zinc finger is the most crucial for interaction with UBE2L3, UBE2L6 and UCKL1.</text>
</comment>
<comment type="domain">
    <text evidence="1">Members of the RBR family are atypical E3 ligases. They interact with the E2 conjugating enzyme UBE2L3 and function like HECT-type E3 enzymes: they bind E2s via the first RING domain, but require an obligate trans-thiolation step during the ubiquitin transfer, requiring a conserved cysteine residue in the second RING domain.</text>
</comment>
<comment type="similarity">
    <text evidence="8">Belongs to the RBR family. RNF19 subfamily.</text>
</comment>
<comment type="sequence caution" evidence="8">
    <conflict type="erroneous initiation">
        <sequence resource="EMBL-CDS" id="AAH52529"/>
    </conflict>
</comment>
<comment type="sequence caution" evidence="8">
    <conflict type="erroneous initiation">
        <sequence resource="EMBL-CDS" id="CAM19707"/>
    </conflict>
</comment>
<proteinExistence type="evidence at protein level"/>
<evidence type="ECO:0000250" key="1">
    <source>
        <dbReference type="UniProtKB" id="O60260"/>
    </source>
</evidence>
<evidence type="ECO:0000250" key="2">
    <source>
        <dbReference type="UniProtKB" id="Q6ZMZ0"/>
    </source>
</evidence>
<evidence type="ECO:0000255" key="3"/>
<evidence type="ECO:0000255" key="4">
    <source>
        <dbReference type="PROSITE-ProRule" id="PRU01221"/>
    </source>
</evidence>
<evidence type="ECO:0000256" key="5">
    <source>
        <dbReference type="SAM" id="MobiDB-lite"/>
    </source>
</evidence>
<evidence type="ECO:0000269" key="6">
    <source>
    </source>
</evidence>
<evidence type="ECO:0000269" key="7">
    <source>
    </source>
</evidence>
<evidence type="ECO:0000305" key="8"/>
<organism>
    <name type="scientific">Mus musculus</name>
    <name type="common">Mouse</name>
    <dbReference type="NCBI Taxonomy" id="10090"/>
    <lineage>
        <taxon>Eukaryota</taxon>
        <taxon>Metazoa</taxon>
        <taxon>Chordata</taxon>
        <taxon>Craniata</taxon>
        <taxon>Vertebrata</taxon>
        <taxon>Euteleostomi</taxon>
        <taxon>Mammalia</taxon>
        <taxon>Eutheria</taxon>
        <taxon>Euarchontoglires</taxon>
        <taxon>Glires</taxon>
        <taxon>Rodentia</taxon>
        <taxon>Myomorpha</taxon>
        <taxon>Muroidea</taxon>
        <taxon>Muridae</taxon>
        <taxon>Murinae</taxon>
        <taxon>Mus</taxon>
        <taxon>Mus</taxon>
    </lineage>
</organism>
<reference key="1">
    <citation type="journal article" date="2000" name="Immunogenetics">
        <title>Gene structure of human and mouse NKLAM, a gene associated with cellular cytotoxicity.</title>
        <authorList>
            <person name="Portis T."/>
            <person name="Anderson J."/>
            <person name="Esposito A."/>
            <person name="Kornbluth J."/>
        </authorList>
    </citation>
    <scope>NUCLEOTIDE SEQUENCE [MRNA]</scope>
    <scope>TISSUE SPECIFICITY</scope>
    <scope>INDUCTION BY CYTOKINES</scope>
</reference>
<reference key="2">
    <citation type="journal article" date="2009" name="PLoS Biol.">
        <title>Lineage-specific biology revealed by a finished genome assembly of the mouse.</title>
        <authorList>
            <person name="Church D.M."/>
            <person name="Goodstadt L."/>
            <person name="Hillier L.W."/>
            <person name="Zody M.C."/>
            <person name="Goldstein S."/>
            <person name="She X."/>
            <person name="Bult C.J."/>
            <person name="Agarwala R."/>
            <person name="Cherry J.L."/>
            <person name="DiCuccio M."/>
            <person name="Hlavina W."/>
            <person name="Kapustin Y."/>
            <person name="Meric P."/>
            <person name="Maglott D."/>
            <person name="Birtle Z."/>
            <person name="Marques A.C."/>
            <person name="Graves T."/>
            <person name="Zhou S."/>
            <person name="Teague B."/>
            <person name="Potamousis K."/>
            <person name="Churas C."/>
            <person name="Place M."/>
            <person name="Herschleb J."/>
            <person name="Runnheim R."/>
            <person name="Forrest D."/>
            <person name="Amos-Landgraf J."/>
            <person name="Schwartz D.C."/>
            <person name="Cheng Z."/>
            <person name="Lindblad-Toh K."/>
            <person name="Eichler E.E."/>
            <person name="Ponting C.P."/>
        </authorList>
    </citation>
    <scope>NUCLEOTIDE SEQUENCE [LARGE SCALE GENOMIC DNA]</scope>
    <source>
        <strain>C57BL/6J</strain>
    </source>
</reference>
<reference key="3">
    <citation type="journal article" date="2004" name="Genome Res.">
        <title>The status, quality, and expansion of the NIH full-length cDNA project: the Mammalian Gene Collection (MGC).</title>
        <authorList>
            <consortium name="The MGC Project Team"/>
        </authorList>
    </citation>
    <scope>NUCLEOTIDE SEQUENCE [LARGE SCALE MRNA] OF 149-732</scope>
    <source>
        <strain>Czech II</strain>
        <tissue>Lung</tissue>
    </source>
</reference>
<reference key="4">
    <citation type="journal article" date="2016" name="Sci. Rep.">
        <title>Genome-wide identification and gene expression profiling of ubiquitin ligases for endoplasmic reticulum protein degradation.</title>
        <authorList>
            <person name="Kaneko M."/>
            <person name="Iwase I."/>
            <person name="Yamasaki Y."/>
            <person name="Takai T."/>
            <person name="Wu Y."/>
            <person name="Kanemoto S."/>
            <person name="Matsuhisa K."/>
            <person name="Asada R."/>
            <person name="Okuma Y."/>
            <person name="Watanabe T."/>
            <person name="Imaizumi K."/>
            <person name="Nomura Y."/>
        </authorList>
    </citation>
    <scope>TISSUE SPECIFICITY</scope>
</reference>